<feature type="chain" id="PRO_1000145037" description="Protein translocase subunit SecA">
    <location>
        <begin position="1"/>
        <end position="941"/>
    </location>
</feature>
<feature type="region of interest" description="Disordered" evidence="2">
    <location>
        <begin position="871"/>
        <end position="919"/>
    </location>
</feature>
<feature type="binding site" evidence="1">
    <location>
        <position position="87"/>
    </location>
    <ligand>
        <name>ATP</name>
        <dbReference type="ChEBI" id="CHEBI:30616"/>
    </ligand>
</feature>
<feature type="binding site" evidence="1">
    <location>
        <begin position="105"/>
        <end position="109"/>
    </location>
    <ligand>
        <name>ATP</name>
        <dbReference type="ChEBI" id="CHEBI:30616"/>
    </ligand>
</feature>
<feature type="binding site" evidence="1">
    <location>
        <position position="524"/>
    </location>
    <ligand>
        <name>ATP</name>
        <dbReference type="ChEBI" id="CHEBI:30616"/>
    </ligand>
</feature>
<feature type="binding site" evidence="1">
    <location>
        <position position="925"/>
    </location>
    <ligand>
        <name>Zn(2+)</name>
        <dbReference type="ChEBI" id="CHEBI:29105"/>
    </ligand>
</feature>
<feature type="binding site" evidence="1">
    <location>
        <position position="927"/>
    </location>
    <ligand>
        <name>Zn(2+)</name>
        <dbReference type="ChEBI" id="CHEBI:29105"/>
    </ligand>
</feature>
<feature type="binding site" evidence="1">
    <location>
        <position position="936"/>
    </location>
    <ligand>
        <name>Zn(2+)</name>
        <dbReference type="ChEBI" id="CHEBI:29105"/>
    </ligand>
</feature>
<feature type="binding site" evidence="1">
    <location>
        <position position="937"/>
    </location>
    <ligand>
        <name>Zn(2+)</name>
        <dbReference type="ChEBI" id="CHEBI:29105"/>
    </ligand>
</feature>
<dbReference type="EC" id="7.4.2.8" evidence="1"/>
<dbReference type="EMBL" id="CP001196">
    <property type="protein sequence ID" value="ACI91233.1"/>
    <property type="molecule type" value="Genomic_DNA"/>
</dbReference>
<dbReference type="EMBL" id="CP002826">
    <property type="protein sequence ID" value="AEI05152.1"/>
    <property type="molecule type" value="Genomic_DNA"/>
</dbReference>
<dbReference type="RefSeq" id="WP_012561265.1">
    <property type="nucleotide sequence ID" value="NC_015684.1"/>
</dbReference>
<dbReference type="SMR" id="B6JAC3"/>
<dbReference type="STRING" id="504832.OCA5_c04270"/>
<dbReference type="KEGG" id="oca:OCAR_4082"/>
<dbReference type="KEGG" id="ocg:OCA5_c04270"/>
<dbReference type="PATRIC" id="fig|504832.7.peg.448"/>
<dbReference type="eggNOG" id="COG0653">
    <property type="taxonomic scope" value="Bacteria"/>
</dbReference>
<dbReference type="HOGENOM" id="CLU_005314_3_0_5"/>
<dbReference type="OrthoDB" id="9805579at2"/>
<dbReference type="Proteomes" id="UP000007730">
    <property type="component" value="Chromosome"/>
</dbReference>
<dbReference type="GO" id="GO:0031522">
    <property type="term" value="C:cell envelope Sec protein transport complex"/>
    <property type="evidence" value="ECO:0007669"/>
    <property type="project" value="TreeGrafter"/>
</dbReference>
<dbReference type="GO" id="GO:0005829">
    <property type="term" value="C:cytosol"/>
    <property type="evidence" value="ECO:0007669"/>
    <property type="project" value="TreeGrafter"/>
</dbReference>
<dbReference type="GO" id="GO:0005886">
    <property type="term" value="C:plasma membrane"/>
    <property type="evidence" value="ECO:0007669"/>
    <property type="project" value="UniProtKB-SubCell"/>
</dbReference>
<dbReference type="GO" id="GO:0005524">
    <property type="term" value="F:ATP binding"/>
    <property type="evidence" value="ECO:0007669"/>
    <property type="project" value="UniProtKB-UniRule"/>
</dbReference>
<dbReference type="GO" id="GO:0046872">
    <property type="term" value="F:metal ion binding"/>
    <property type="evidence" value="ECO:0007669"/>
    <property type="project" value="UniProtKB-KW"/>
</dbReference>
<dbReference type="GO" id="GO:0008564">
    <property type="term" value="F:protein-exporting ATPase activity"/>
    <property type="evidence" value="ECO:0007669"/>
    <property type="project" value="UniProtKB-EC"/>
</dbReference>
<dbReference type="GO" id="GO:0065002">
    <property type="term" value="P:intracellular protein transmembrane transport"/>
    <property type="evidence" value="ECO:0007669"/>
    <property type="project" value="UniProtKB-UniRule"/>
</dbReference>
<dbReference type="GO" id="GO:0017038">
    <property type="term" value="P:protein import"/>
    <property type="evidence" value="ECO:0007669"/>
    <property type="project" value="InterPro"/>
</dbReference>
<dbReference type="GO" id="GO:0006605">
    <property type="term" value="P:protein targeting"/>
    <property type="evidence" value="ECO:0007669"/>
    <property type="project" value="UniProtKB-UniRule"/>
</dbReference>
<dbReference type="GO" id="GO:0043952">
    <property type="term" value="P:protein transport by the Sec complex"/>
    <property type="evidence" value="ECO:0007669"/>
    <property type="project" value="TreeGrafter"/>
</dbReference>
<dbReference type="CDD" id="cd17928">
    <property type="entry name" value="DEXDc_SecA"/>
    <property type="match status" value="1"/>
</dbReference>
<dbReference type="CDD" id="cd18803">
    <property type="entry name" value="SF2_C_secA"/>
    <property type="match status" value="1"/>
</dbReference>
<dbReference type="FunFam" id="3.90.1440.10:FF:000001">
    <property type="entry name" value="Preprotein translocase subunit SecA"/>
    <property type="match status" value="1"/>
</dbReference>
<dbReference type="FunFam" id="1.10.3060.10:FF:000003">
    <property type="entry name" value="Protein translocase subunit SecA"/>
    <property type="match status" value="1"/>
</dbReference>
<dbReference type="FunFam" id="3.40.50.300:FF:000334">
    <property type="entry name" value="Protein translocase subunit SecA"/>
    <property type="match status" value="1"/>
</dbReference>
<dbReference type="FunFam" id="3.40.50.300:FF:001790">
    <property type="entry name" value="Protein translocase subunit SecA"/>
    <property type="match status" value="1"/>
</dbReference>
<dbReference type="Gene3D" id="1.10.3060.10">
    <property type="entry name" value="Helical scaffold and wing domains of SecA"/>
    <property type="match status" value="1"/>
</dbReference>
<dbReference type="Gene3D" id="3.40.50.300">
    <property type="entry name" value="P-loop containing nucleotide triphosphate hydrolases"/>
    <property type="match status" value="2"/>
</dbReference>
<dbReference type="Gene3D" id="3.90.1440.10">
    <property type="entry name" value="SecA, preprotein cross-linking domain"/>
    <property type="match status" value="1"/>
</dbReference>
<dbReference type="HAMAP" id="MF_01382">
    <property type="entry name" value="SecA"/>
    <property type="match status" value="1"/>
</dbReference>
<dbReference type="InterPro" id="IPR014001">
    <property type="entry name" value="Helicase_ATP-bd"/>
</dbReference>
<dbReference type="InterPro" id="IPR027417">
    <property type="entry name" value="P-loop_NTPase"/>
</dbReference>
<dbReference type="InterPro" id="IPR004027">
    <property type="entry name" value="SEC_C_motif"/>
</dbReference>
<dbReference type="InterPro" id="IPR000185">
    <property type="entry name" value="SecA"/>
</dbReference>
<dbReference type="InterPro" id="IPR020937">
    <property type="entry name" value="SecA_CS"/>
</dbReference>
<dbReference type="InterPro" id="IPR011115">
    <property type="entry name" value="SecA_DEAD"/>
</dbReference>
<dbReference type="InterPro" id="IPR014018">
    <property type="entry name" value="SecA_motor_DEAD"/>
</dbReference>
<dbReference type="InterPro" id="IPR011130">
    <property type="entry name" value="SecA_preprotein_X-link_dom"/>
</dbReference>
<dbReference type="InterPro" id="IPR044722">
    <property type="entry name" value="SecA_SF2_C"/>
</dbReference>
<dbReference type="InterPro" id="IPR011116">
    <property type="entry name" value="SecA_Wing/Scaffold"/>
</dbReference>
<dbReference type="InterPro" id="IPR036266">
    <property type="entry name" value="SecA_Wing/Scaffold_sf"/>
</dbReference>
<dbReference type="InterPro" id="IPR036670">
    <property type="entry name" value="SecA_X-link_sf"/>
</dbReference>
<dbReference type="NCBIfam" id="NF009538">
    <property type="entry name" value="PRK12904.1"/>
    <property type="match status" value="1"/>
</dbReference>
<dbReference type="NCBIfam" id="TIGR00963">
    <property type="entry name" value="secA"/>
    <property type="match status" value="1"/>
</dbReference>
<dbReference type="PANTHER" id="PTHR30612:SF0">
    <property type="entry name" value="CHLOROPLAST PROTEIN-TRANSPORTING ATPASE"/>
    <property type="match status" value="1"/>
</dbReference>
<dbReference type="PANTHER" id="PTHR30612">
    <property type="entry name" value="SECA INNER MEMBRANE COMPONENT OF SEC PROTEIN SECRETION SYSTEM"/>
    <property type="match status" value="1"/>
</dbReference>
<dbReference type="Pfam" id="PF21090">
    <property type="entry name" value="P-loop_SecA"/>
    <property type="match status" value="1"/>
</dbReference>
<dbReference type="Pfam" id="PF02810">
    <property type="entry name" value="SEC-C"/>
    <property type="match status" value="1"/>
</dbReference>
<dbReference type="Pfam" id="PF07517">
    <property type="entry name" value="SecA_DEAD"/>
    <property type="match status" value="1"/>
</dbReference>
<dbReference type="Pfam" id="PF01043">
    <property type="entry name" value="SecA_PP_bind"/>
    <property type="match status" value="1"/>
</dbReference>
<dbReference type="Pfam" id="PF07516">
    <property type="entry name" value="SecA_SW"/>
    <property type="match status" value="1"/>
</dbReference>
<dbReference type="PRINTS" id="PR00906">
    <property type="entry name" value="SECA"/>
</dbReference>
<dbReference type="SMART" id="SM00957">
    <property type="entry name" value="SecA_DEAD"/>
    <property type="match status" value="1"/>
</dbReference>
<dbReference type="SMART" id="SM00958">
    <property type="entry name" value="SecA_PP_bind"/>
    <property type="match status" value="1"/>
</dbReference>
<dbReference type="SUPFAM" id="SSF81886">
    <property type="entry name" value="Helical scaffold and wing domains of SecA"/>
    <property type="match status" value="1"/>
</dbReference>
<dbReference type="SUPFAM" id="SSF52540">
    <property type="entry name" value="P-loop containing nucleoside triphosphate hydrolases"/>
    <property type="match status" value="2"/>
</dbReference>
<dbReference type="SUPFAM" id="SSF81767">
    <property type="entry name" value="Pre-protein crosslinking domain of SecA"/>
    <property type="match status" value="1"/>
</dbReference>
<dbReference type="PROSITE" id="PS01312">
    <property type="entry name" value="SECA"/>
    <property type="match status" value="1"/>
</dbReference>
<dbReference type="PROSITE" id="PS51196">
    <property type="entry name" value="SECA_MOTOR_DEAD"/>
    <property type="match status" value="1"/>
</dbReference>
<reference key="1">
    <citation type="journal article" date="2008" name="J. Bacteriol.">
        <title>Genome sequence of the chemolithoautotrophic bacterium Oligotropha carboxidovorans OM5T.</title>
        <authorList>
            <person name="Paul D."/>
            <person name="Bridges S."/>
            <person name="Burgess S.C."/>
            <person name="Dandass Y."/>
            <person name="Lawrence M.L."/>
        </authorList>
    </citation>
    <scope>NUCLEOTIDE SEQUENCE [LARGE SCALE GENOMIC DNA]</scope>
    <source>
        <strain>ATCC 49405 / DSM 1227 / KCTC 32145 / OM5</strain>
    </source>
</reference>
<reference key="2">
    <citation type="journal article" date="2011" name="J. Bacteriol.">
        <title>Complete genome sequences of the chemolithoautotrophic Oligotropha carboxidovorans strains OM4 and OM5.</title>
        <authorList>
            <person name="Volland S."/>
            <person name="Rachinger M."/>
            <person name="Strittmatter A."/>
            <person name="Daniel R."/>
            <person name="Gottschalk G."/>
            <person name="Meyer O."/>
        </authorList>
    </citation>
    <scope>NUCLEOTIDE SEQUENCE [LARGE SCALE GENOMIC DNA]</scope>
    <source>
        <strain>ATCC 49405 / DSM 1227 / KCTC 32145 / OM5</strain>
    </source>
</reference>
<proteinExistence type="inferred from homology"/>
<name>SECA_AFIC5</name>
<protein>
    <recommendedName>
        <fullName evidence="1">Protein translocase subunit SecA</fullName>
        <ecNumber evidence="1">7.4.2.8</ecNumber>
    </recommendedName>
</protein>
<gene>
    <name evidence="1" type="primary">secA</name>
    <name type="ordered locus">OCAR_4082</name>
    <name type="ordered locus">OCA5_c04270</name>
</gene>
<organism>
    <name type="scientific">Afipia carboxidovorans (strain ATCC 49405 / DSM 1227 / KCTC 32145 / OM5)</name>
    <name type="common">Oligotropha carboxidovorans</name>
    <dbReference type="NCBI Taxonomy" id="504832"/>
    <lineage>
        <taxon>Bacteria</taxon>
        <taxon>Pseudomonadati</taxon>
        <taxon>Pseudomonadota</taxon>
        <taxon>Alphaproteobacteria</taxon>
        <taxon>Hyphomicrobiales</taxon>
        <taxon>Nitrobacteraceae</taxon>
        <taxon>Afipia</taxon>
    </lineage>
</organism>
<evidence type="ECO:0000255" key="1">
    <source>
        <dbReference type="HAMAP-Rule" id="MF_01382"/>
    </source>
</evidence>
<evidence type="ECO:0000256" key="2">
    <source>
        <dbReference type="SAM" id="MobiDB-lite"/>
    </source>
</evidence>
<keyword id="KW-0067">ATP-binding</keyword>
<keyword id="KW-0997">Cell inner membrane</keyword>
<keyword id="KW-1003">Cell membrane</keyword>
<keyword id="KW-0963">Cytoplasm</keyword>
<keyword id="KW-0472">Membrane</keyword>
<keyword id="KW-0479">Metal-binding</keyword>
<keyword id="KW-0547">Nucleotide-binding</keyword>
<keyword id="KW-0653">Protein transport</keyword>
<keyword id="KW-1185">Reference proteome</keyword>
<keyword id="KW-1278">Translocase</keyword>
<keyword id="KW-0811">Translocation</keyword>
<keyword id="KW-0813">Transport</keyword>
<keyword id="KW-0862">Zinc</keyword>
<sequence>MIGALARKIFGSANDRRVKGYQARVDAINAMEPEIAALSDEALKARTAEFKQQLASGKTLDDILVPAFATVREAAKRTLGQRHFDVQLIGGMVLHEGDIAEMKTGEGKTLVATLAVYLNALTGRGVHVVTVNDYLAKRDAEWMSQVYSFLGLTTGIIIHGLDDPERQAAYACDITYGTNNEFGFDYLRDNMKYRLEDMVQRDHVFAIVDEVDSILIDEARTPLIISGPLDDRSEFYNTIDTFIPKLEPADYEIDEKQRTVTLTEGGMEKLEQMLREAGLLKGESLYDIENVSVVHHVNQALRAHRLFTRDKDYIVRDGEVVIIDEFTGRMMPGRRYSEGLHQALEAKEHQPVQPENQTLASITFQNYFRMYEKLGGMTGTAATEADEFFDIYKLEVLEIPTNLPIARLDEDDEVYRSSREKYAAILAEIERANGRMQPVLVGTASIEKSEVLADFLKEHGYKQIDFANPKSMAKLYDAARAGKPSKLFAVLNARFHEQEAYIVAEAGVPGAITIATNMAGRGTDIKLGGSLEMRAAAATAGIEDEAEKQKIVEGIKADIEKFKEMVLAAEETVELEPGKPGGKTIKKPGGLYIIGSERHESRRIDNQLRGRAGRQGDPGRTKFYLSLDDDLMRIFGSDRLEGMLQRLGLKEGEAIIHPWINKALEKAQQKVEARNFDIRKNLLKYDDVQNDQRKVIFEQRIDLMRDQNVSETVTDMRHTLIEGLVAKHIPEHAYPEQWDVSGLREELQRVIGLDLPVEDWAKEEGIADEEMLSRLQQRVDEHMAAKSAQWGPEVMRYVEKTILLQTLDHLWREHLIMLDHLRQVIGLRGYGQRDPLQEYKSEAFELFESLISHMREAVTAQLMRVEIVPPDEQPPMPAMEAHKLDPNTGEDQVAQAQSGLAPVAPAKRDPANPATWGKVGRNEDCPCGSGRKFKHCHGRYA</sequence>
<comment type="function">
    <text evidence="1">Part of the Sec protein translocase complex. Interacts with the SecYEG preprotein conducting channel. Has a central role in coupling the hydrolysis of ATP to the transfer of proteins into and across the cell membrane, serving both as a receptor for the preprotein-SecB complex and as an ATP-driven molecular motor driving the stepwise translocation of polypeptide chains across the membrane.</text>
</comment>
<comment type="catalytic activity">
    <reaction evidence="1">
        <text>ATP + H2O + cellular proteinSide 1 = ADP + phosphate + cellular proteinSide 2.</text>
        <dbReference type="EC" id="7.4.2.8"/>
    </reaction>
</comment>
<comment type="cofactor">
    <cofactor evidence="1">
        <name>Zn(2+)</name>
        <dbReference type="ChEBI" id="CHEBI:29105"/>
    </cofactor>
    <text evidence="1">May bind 1 zinc ion per subunit.</text>
</comment>
<comment type="subunit">
    <text evidence="1">Monomer and homodimer. Part of the essential Sec protein translocation apparatus which comprises SecA, SecYEG and auxiliary proteins SecDF-YajC and YidC.</text>
</comment>
<comment type="subcellular location">
    <subcellularLocation>
        <location evidence="1">Cell inner membrane</location>
        <topology evidence="1">Peripheral membrane protein</topology>
        <orientation evidence="1">Cytoplasmic side</orientation>
    </subcellularLocation>
    <subcellularLocation>
        <location evidence="1">Cytoplasm</location>
    </subcellularLocation>
    <text evidence="1">Distribution is 50-50.</text>
</comment>
<comment type="similarity">
    <text evidence="1">Belongs to the SecA family.</text>
</comment>
<accession>B6JAC3</accession>
<accession>F8BV92</accession>